<protein>
    <recommendedName>
        <fullName evidence="5">Selenoprotein M</fullName>
        <shortName evidence="5">SelM</shortName>
    </recommendedName>
</protein>
<name>SELM_MOUSE</name>
<sequence>MSILLSPPSLLLLLAALVAPATSTTNYRPDWNRLRGLARGRVETCGGUQLNRLKEVKAFVTEDIQLYHNLVMKHLPGADPELVLLSRNYQELERIPLSQMTRDEINALVQELGFYRKSAPEAQVPPEYLWAPAKPPEEASEHDDL</sequence>
<keyword id="KW-0002">3D-structure</keyword>
<keyword id="KW-0963">Cytoplasm</keyword>
<keyword id="KW-0256">Endoplasmic reticulum</keyword>
<keyword id="KW-0333">Golgi apparatus</keyword>
<keyword id="KW-1185">Reference proteome</keyword>
<keyword id="KW-0712">Selenocysteine</keyword>
<keyword id="KW-0732">Signal</keyword>
<proteinExistence type="evidence at protein level"/>
<organism>
    <name type="scientific">Mus musculus</name>
    <name type="common">Mouse</name>
    <dbReference type="NCBI Taxonomy" id="10090"/>
    <lineage>
        <taxon>Eukaryota</taxon>
        <taxon>Metazoa</taxon>
        <taxon>Chordata</taxon>
        <taxon>Craniata</taxon>
        <taxon>Vertebrata</taxon>
        <taxon>Euteleostomi</taxon>
        <taxon>Mammalia</taxon>
        <taxon>Eutheria</taxon>
        <taxon>Euarchontoglires</taxon>
        <taxon>Glires</taxon>
        <taxon>Rodentia</taxon>
        <taxon>Myomorpha</taxon>
        <taxon>Muroidea</taxon>
        <taxon>Muridae</taxon>
        <taxon>Murinae</taxon>
        <taxon>Mus</taxon>
        <taxon>Mus</taxon>
    </lineage>
</organism>
<reference key="1">
    <citation type="journal article" date="2002" name="Mol. Cell. Biol.">
        <title>Mammalian selenoprotein in which selenocysteine (Sec) incorporation is supported by a new form of Sec insertion sequence element.</title>
        <authorList>
            <person name="Korotkov K.V."/>
            <person name="Novoselov S.V."/>
            <person name="Hatfield D.L."/>
            <person name="Gladyshev V.N."/>
        </authorList>
    </citation>
    <scope>NUCLEOTIDE SEQUENCE [MRNA]</scope>
    <scope>SUBCELLULAR LOCATION</scope>
    <scope>TISSUE SPECIFICITY</scope>
</reference>
<reference key="2">
    <citation type="journal article" date="2005" name="Science">
        <title>The transcriptional landscape of the mammalian genome.</title>
        <authorList>
            <person name="Carninci P."/>
            <person name="Kasukawa T."/>
            <person name="Katayama S."/>
            <person name="Gough J."/>
            <person name="Frith M.C."/>
            <person name="Maeda N."/>
            <person name="Oyama R."/>
            <person name="Ravasi T."/>
            <person name="Lenhard B."/>
            <person name="Wells C."/>
            <person name="Kodzius R."/>
            <person name="Shimokawa K."/>
            <person name="Bajic V.B."/>
            <person name="Brenner S.E."/>
            <person name="Batalov S."/>
            <person name="Forrest A.R."/>
            <person name="Zavolan M."/>
            <person name="Davis M.J."/>
            <person name="Wilming L.G."/>
            <person name="Aidinis V."/>
            <person name="Allen J.E."/>
            <person name="Ambesi-Impiombato A."/>
            <person name="Apweiler R."/>
            <person name="Aturaliya R.N."/>
            <person name="Bailey T.L."/>
            <person name="Bansal M."/>
            <person name="Baxter L."/>
            <person name="Beisel K.W."/>
            <person name="Bersano T."/>
            <person name="Bono H."/>
            <person name="Chalk A.M."/>
            <person name="Chiu K.P."/>
            <person name="Choudhary V."/>
            <person name="Christoffels A."/>
            <person name="Clutterbuck D.R."/>
            <person name="Crowe M.L."/>
            <person name="Dalla E."/>
            <person name="Dalrymple B.P."/>
            <person name="de Bono B."/>
            <person name="Della Gatta G."/>
            <person name="di Bernardo D."/>
            <person name="Down T."/>
            <person name="Engstrom P."/>
            <person name="Fagiolini M."/>
            <person name="Faulkner G."/>
            <person name="Fletcher C.F."/>
            <person name="Fukushima T."/>
            <person name="Furuno M."/>
            <person name="Futaki S."/>
            <person name="Gariboldi M."/>
            <person name="Georgii-Hemming P."/>
            <person name="Gingeras T.R."/>
            <person name="Gojobori T."/>
            <person name="Green R.E."/>
            <person name="Gustincich S."/>
            <person name="Harbers M."/>
            <person name="Hayashi Y."/>
            <person name="Hensch T.K."/>
            <person name="Hirokawa N."/>
            <person name="Hill D."/>
            <person name="Huminiecki L."/>
            <person name="Iacono M."/>
            <person name="Ikeo K."/>
            <person name="Iwama A."/>
            <person name="Ishikawa T."/>
            <person name="Jakt M."/>
            <person name="Kanapin A."/>
            <person name="Katoh M."/>
            <person name="Kawasawa Y."/>
            <person name="Kelso J."/>
            <person name="Kitamura H."/>
            <person name="Kitano H."/>
            <person name="Kollias G."/>
            <person name="Krishnan S.P."/>
            <person name="Kruger A."/>
            <person name="Kummerfeld S.K."/>
            <person name="Kurochkin I.V."/>
            <person name="Lareau L.F."/>
            <person name="Lazarevic D."/>
            <person name="Lipovich L."/>
            <person name="Liu J."/>
            <person name="Liuni S."/>
            <person name="McWilliam S."/>
            <person name="Madan Babu M."/>
            <person name="Madera M."/>
            <person name="Marchionni L."/>
            <person name="Matsuda H."/>
            <person name="Matsuzawa S."/>
            <person name="Miki H."/>
            <person name="Mignone F."/>
            <person name="Miyake S."/>
            <person name="Morris K."/>
            <person name="Mottagui-Tabar S."/>
            <person name="Mulder N."/>
            <person name="Nakano N."/>
            <person name="Nakauchi H."/>
            <person name="Ng P."/>
            <person name="Nilsson R."/>
            <person name="Nishiguchi S."/>
            <person name="Nishikawa S."/>
            <person name="Nori F."/>
            <person name="Ohara O."/>
            <person name="Okazaki Y."/>
            <person name="Orlando V."/>
            <person name="Pang K.C."/>
            <person name="Pavan W.J."/>
            <person name="Pavesi G."/>
            <person name="Pesole G."/>
            <person name="Petrovsky N."/>
            <person name="Piazza S."/>
            <person name="Reed J."/>
            <person name="Reid J.F."/>
            <person name="Ring B.Z."/>
            <person name="Ringwald M."/>
            <person name="Rost B."/>
            <person name="Ruan Y."/>
            <person name="Salzberg S.L."/>
            <person name="Sandelin A."/>
            <person name="Schneider C."/>
            <person name="Schoenbach C."/>
            <person name="Sekiguchi K."/>
            <person name="Semple C.A."/>
            <person name="Seno S."/>
            <person name="Sessa L."/>
            <person name="Sheng Y."/>
            <person name="Shibata Y."/>
            <person name="Shimada H."/>
            <person name="Shimada K."/>
            <person name="Silva D."/>
            <person name="Sinclair B."/>
            <person name="Sperling S."/>
            <person name="Stupka E."/>
            <person name="Sugiura K."/>
            <person name="Sultana R."/>
            <person name="Takenaka Y."/>
            <person name="Taki K."/>
            <person name="Tammoja K."/>
            <person name="Tan S.L."/>
            <person name="Tang S."/>
            <person name="Taylor M.S."/>
            <person name="Tegner J."/>
            <person name="Teichmann S.A."/>
            <person name="Ueda H.R."/>
            <person name="van Nimwegen E."/>
            <person name="Verardo R."/>
            <person name="Wei C.L."/>
            <person name="Yagi K."/>
            <person name="Yamanishi H."/>
            <person name="Zabarovsky E."/>
            <person name="Zhu S."/>
            <person name="Zimmer A."/>
            <person name="Hide W."/>
            <person name="Bult C."/>
            <person name="Grimmond S.M."/>
            <person name="Teasdale R.D."/>
            <person name="Liu E.T."/>
            <person name="Brusic V."/>
            <person name="Quackenbush J."/>
            <person name="Wahlestedt C."/>
            <person name="Mattick J.S."/>
            <person name="Hume D.A."/>
            <person name="Kai C."/>
            <person name="Sasaki D."/>
            <person name="Tomaru Y."/>
            <person name="Fukuda S."/>
            <person name="Kanamori-Katayama M."/>
            <person name="Suzuki M."/>
            <person name="Aoki J."/>
            <person name="Arakawa T."/>
            <person name="Iida J."/>
            <person name="Imamura K."/>
            <person name="Itoh M."/>
            <person name="Kato T."/>
            <person name="Kawaji H."/>
            <person name="Kawagashira N."/>
            <person name="Kawashima T."/>
            <person name="Kojima M."/>
            <person name="Kondo S."/>
            <person name="Konno H."/>
            <person name="Nakano K."/>
            <person name="Ninomiya N."/>
            <person name="Nishio T."/>
            <person name="Okada M."/>
            <person name="Plessy C."/>
            <person name="Shibata K."/>
            <person name="Shiraki T."/>
            <person name="Suzuki S."/>
            <person name="Tagami M."/>
            <person name="Waki K."/>
            <person name="Watahiki A."/>
            <person name="Okamura-Oho Y."/>
            <person name="Suzuki H."/>
            <person name="Kawai J."/>
            <person name="Hayashizaki Y."/>
        </authorList>
    </citation>
    <scope>NUCLEOTIDE SEQUENCE [LARGE SCALE MRNA]</scope>
    <source>
        <strain>C57BL/6J</strain>
        <tissue>Cerebellum</tissue>
        <tissue>Corpora quadrigemina</tissue>
        <tissue>Urinary bladder</tissue>
    </source>
</reference>
<reference key="3">
    <citation type="journal article" date="2004" name="Genome Res.">
        <title>The status, quality, and expansion of the NIH full-length cDNA project: the Mammalian Gene Collection (MGC).</title>
        <authorList>
            <consortium name="The MGC Project Team"/>
        </authorList>
    </citation>
    <scope>NUCLEOTIDE SEQUENCE [LARGE SCALE MRNA]</scope>
    <source>
        <tissue>Brain</tissue>
        <tissue>Mammary gland</tissue>
    </source>
</reference>
<reference key="4">
    <citation type="journal article" date="2010" name="Cell">
        <title>A tissue-specific atlas of mouse protein phosphorylation and expression.</title>
        <authorList>
            <person name="Huttlin E.L."/>
            <person name="Jedrychowski M.P."/>
            <person name="Elias J.E."/>
            <person name="Goswami T."/>
            <person name="Rad R."/>
            <person name="Beausoleil S.A."/>
            <person name="Villen J."/>
            <person name="Haas W."/>
            <person name="Sowa M.E."/>
            <person name="Gygi S.P."/>
        </authorList>
    </citation>
    <scope>IDENTIFICATION BY MASS SPECTROMETRY [LARGE SCALE ANALYSIS]</scope>
    <source>
        <tissue>Brain</tissue>
        <tissue>Heart</tissue>
        <tissue>Kidney</tissue>
        <tissue>Pancreas</tissue>
        <tissue>Testis</tissue>
    </source>
</reference>
<reference key="5">
    <citation type="journal article" date="2006" name="J. Biol. Chem.">
        <title>NMR structures of the selenoproteins Sep15 and SelM reveal redox activity of a new thioredoxin-like family.</title>
        <authorList>
            <person name="Ferguson A.D."/>
            <person name="Labunskyy V.M."/>
            <person name="Fomenko D.E."/>
            <person name="Arac D."/>
            <person name="Chelliah Y."/>
            <person name="Amezcua C.A."/>
            <person name="Rizo J."/>
            <person name="Gladyshev V.N."/>
            <person name="Deisenhofer J."/>
        </authorList>
    </citation>
    <scope>STRUCTURE BY NMR OF 25-145</scope>
</reference>
<accession>Q8VHC3</accession>
<accession>B2RVS9</accession>
<accession>Q3V374</accession>
<accession>Q8CBT7</accession>
<accession>Q8VCJ0</accession>
<feature type="signal peptide" evidence="2">
    <location>
        <begin position="1"/>
        <end position="23"/>
    </location>
</feature>
<feature type="chain" id="PRO_0000022299" description="Selenoprotein M">
    <location>
        <begin position="24"/>
        <end position="145"/>
    </location>
</feature>
<feature type="region of interest" description="Disordered" evidence="3">
    <location>
        <begin position="125"/>
        <end position="145"/>
    </location>
</feature>
<feature type="active site" description="Nucleophile" evidence="1">
    <location>
        <position position="45"/>
    </location>
</feature>
<feature type="active site" description="Nucleophile" evidence="1">
    <location>
        <position position="48"/>
    </location>
</feature>
<feature type="non-standard amino acid" description="Selenocysteine">
    <location>
        <position position="48"/>
    </location>
</feature>
<feature type="cross-link" description="Cysteinyl-selenocysteine (Cys-Sec)" evidence="2">
    <location>
        <begin position="45"/>
        <end position="48"/>
    </location>
</feature>
<feature type="sequence conflict" description="In Ref. 2; BAE43327." evidence="6" ref="2">
    <original>A</original>
    <variation>E</variation>
    <location>
        <position position="107"/>
    </location>
</feature>
<feature type="helix" evidence="9">
    <location>
        <begin position="31"/>
        <end position="34"/>
    </location>
</feature>
<feature type="strand" evidence="9">
    <location>
        <begin position="39"/>
        <end position="45"/>
    </location>
</feature>
<feature type="helix" evidence="9">
    <location>
        <begin position="54"/>
        <end position="59"/>
    </location>
</feature>
<feature type="turn" evidence="9">
    <location>
        <begin position="60"/>
        <end position="62"/>
    </location>
</feature>
<feature type="helix" evidence="9">
    <location>
        <begin position="63"/>
        <end position="66"/>
    </location>
</feature>
<feature type="strand" evidence="9">
    <location>
        <begin position="70"/>
        <end position="77"/>
    </location>
</feature>
<feature type="strand" evidence="9">
    <location>
        <begin position="81"/>
        <end position="85"/>
    </location>
</feature>
<feature type="strand" evidence="9">
    <location>
        <begin position="87"/>
        <end position="89"/>
    </location>
</feature>
<feature type="strand" evidence="9">
    <location>
        <begin position="93"/>
        <end position="96"/>
    </location>
</feature>
<feature type="strand" evidence="9">
    <location>
        <begin position="98"/>
        <end position="100"/>
    </location>
</feature>
<feature type="helix" evidence="9">
    <location>
        <begin position="102"/>
        <end position="112"/>
    </location>
</feature>
<feature type="helix" evidence="9">
    <location>
        <begin position="126"/>
        <end position="128"/>
    </location>
</feature>
<gene>
    <name evidence="8" type="primary">Selenom</name>
</gene>
<dbReference type="EMBL" id="AY043488">
    <property type="protein sequence ID" value="AAK95398.1"/>
    <property type="molecule type" value="mRNA"/>
</dbReference>
<dbReference type="EMBL" id="AK018791">
    <property type="protein sequence ID" value="BAE43252.1"/>
    <property type="molecule type" value="mRNA"/>
</dbReference>
<dbReference type="EMBL" id="AK035312">
    <property type="protein sequence ID" value="BAC29028.2"/>
    <property type="molecule type" value="mRNA"/>
</dbReference>
<dbReference type="EMBL" id="AK046034">
    <property type="protein sequence ID" value="BAE43327.1"/>
    <property type="molecule type" value="mRNA"/>
</dbReference>
<dbReference type="EMBL" id="BC019742">
    <property type="protein sequence ID" value="AAH19742.1"/>
    <property type="status" value="ALT_SEQ"/>
    <property type="molecule type" value="mRNA"/>
</dbReference>
<dbReference type="EMBL" id="BC147332">
    <property type="protein sequence ID" value="AAI47333.1"/>
    <property type="molecule type" value="mRNA"/>
</dbReference>
<dbReference type="EMBL" id="BC147333">
    <property type="protein sequence ID" value="AAI47334.1"/>
    <property type="molecule type" value="mRNA"/>
</dbReference>
<dbReference type="CCDS" id="CCDS24365.1"/>
<dbReference type="RefSeq" id="NP_444497.1">
    <property type="nucleotide sequence ID" value="NM_053267.3"/>
</dbReference>
<dbReference type="PDB" id="2A2P">
    <property type="method" value="NMR"/>
    <property type="chains" value="A=25-145"/>
</dbReference>
<dbReference type="PDBsum" id="2A2P"/>
<dbReference type="SMR" id="Q8VHC3"/>
<dbReference type="BioGRID" id="227807">
    <property type="interactions" value="1"/>
</dbReference>
<dbReference type="FunCoup" id="Q8VHC3">
    <property type="interactions" value="531"/>
</dbReference>
<dbReference type="STRING" id="10090.ENSMUSP00000092041"/>
<dbReference type="iPTMnet" id="Q8VHC3"/>
<dbReference type="PhosphoSitePlus" id="Q8VHC3"/>
<dbReference type="jPOST" id="Q8VHC3"/>
<dbReference type="PaxDb" id="10090-ENSMUSP00000092041"/>
<dbReference type="PeptideAtlas" id="Q8VHC3"/>
<dbReference type="ProteomicsDB" id="257116"/>
<dbReference type="Pumba" id="Q8VHC3"/>
<dbReference type="Antibodypedia" id="5738">
    <property type="antibodies" value="134 antibodies from 20 providers"/>
</dbReference>
<dbReference type="DNASU" id="114679"/>
<dbReference type="Ensembl" id="ENSMUST00000094469.6">
    <property type="protein sequence ID" value="ENSMUSP00000092041.6"/>
    <property type="gene ID" value="ENSMUSG00000075702.11"/>
</dbReference>
<dbReference type="GeneID" id="114679"/>
<dbReference type="KEGG" id="mmu:114679"/>
<dbReference type="UCSC" id="uc007htd.1">
    <property type="organism name" value="mouse"/>
</dbReference>
<dbReference type="AGR" id="MGI:2149786"/>
<dbReference type="CTD" id="140606"/>
<dbReference type="MGI" id="MGI:2149786">
    <property type="gene designation" value="Selenom"/>
</dbReference>
<dbReference type="VEuPathDB" id="HostDB:ENSMUSG00000075702"/>
<dbReference type="eggNOG" id="ENOG502S29K">
    <property type="taxonomic scope" value="Eukaryota"/>
</dbReference>
<dbReference type="GeneTree" id="ENSGT00940000154284"/>
<dbReference type="HOGENOM" id="CLU_140417_0_0_1"/>
<dbReference type="InParanoid" id="Q8VHC3"/>
<dbReference type="OMA" id="DWNRLHG"/>
<dbReference type="OrthoDB" id="25165at2759"/>
<dbReference type="PhylomeDB" id="Q8VHC3"/>
<dbReference type="TreeFam" id="TF333248"/>
<dbReference type="BioGRID-ORCS" id="114679">
    <property type="hits" value="4 hits in 76 CRISPR screens"/>
</dbReference>
<dbReference type="EvolutionaryTrace" id="Q8VHC3"/>
<dbReference type="PRO" id="PR:Q8VHC3"/>
<dbReference type="Proteomes" id="UP000000589">
    <property type="component" value="Chromosome 11"/>
</dbReference>
<dbReference type="RNAct" id="Q8VHC3">
    <property type="molecule type" value="protein"/>
</dbReference>
<dbReference type="Bgee" id="ENSMUSG00000075702">
    <property type="expression patterns" value="Expressed in cerebellar cortex and 239 other cell types or tissues"/>
</dbReference>
<dbReference type="GO" id="GO:0005783">
    <property type="term" value="C:endoplasmic reticulum"/>
    <property type="evidence" value="ECO:0000314"/>
    <property type="project" value="MGI"/>
</dbReference>
<dbReference type="GO" id="GO:0005794">
    <property type="term" value="C:Golgi apparatus"/>
    <property type="evidence" value="ECO:0000314"/>
    <property type="project" value="MGI"/>
</dbReference>
<dbReference type="GO" id="GO:0048471">
    <property type="term" value="C:perinuclear region of cytoplasm"/>
    <property type="evidence" value="ECO:0007669"/>
    <property type="project" value="UniProtKB-SubCell"/>
</dbReference>
<dbReference type="GO" id="GO:0060612">
    <property type="term" value="P:adipose tissue development"/>
    <property type="evidence" value="ECO:0000315"/>
    <property type="project" value="MGI"/>
</dbReference>
<dbReference type="GO" id="GO:0035934">
    <property type="term" value="P:corticosterone secretion"/>
    <property type="evidence" value="ECO:0000315"/>
    <property type="project" value="MGI"/>
</dbReference>
<dbReference type="GO" id="GO:0042445">
    <property type="term" value="P:hormone metabolic process"/>
    <property type="evidence" value="ECO:0000315"/>
    <property type="project" value="MGI"/>
</dbReference>
<dbReference type="GO" id="GO:0035264">
    <property type="term" value="P:multicellular organism growth"/>
    <property type="evidence" value="ECO:0000315"/>
    <property type="project" value="MGI"/>
</dbReference>
<dbReference type="GO" id="GO:0010269">
    <property type="term" value="P:response to selenium ion"/>
    <property type="evidence" value="ECO:0000315"/>
    <property type="project" value="MGI"/>
</dbReference>
<dbReference type="FunFam" id="3.40.30.50:FF:000002">
    <property type="entry name" value="Selenoprotein M"/>
    <property type="match status" value="1"/>
</dbReference>
<dbReference type="Gene3D" id="3.40.30.50">
    <property type="entry name" value="Sep15/SelM thioredoxin-like domain, active-site redox motif"/>
    <property type="match status" value="1"/>
</dbReference>
<dbReference type="InterPro" id="IPR038219">
    <property type="entry name" value="Sep15/SelM_sf"/>
</dbReference>
<dbReference type="InterPro" id="IPR039992">
    <property type="entry name" value="Sep15_SelM"/>
</dbReference>
<dbReference type="InterPro" id="IPR014912">
    <property type="entry name" value="Sep15_SelM_dom"/>
</dbReference>
<dbReference type="InterPro" id="IPR036249">
    <property type="entry name" value="Thioredoxin-like_sf"/>
</dbReference>
<dbReference type="PANTHER" id="PTHR13077">
    <property type="entry name" value="SELENOPROTEIN F"/>
    <property type="match status" value="1"/>
</dbReference>
<dbReference type="PANTHER" id="PTHR13077:SF7">
    <property type="entry name" value="SELENOPROTEIN M"/>
    <property type="match status" value="1"/>
</dbReference>
<dbReference type="Pfam" id="PF08806">
    <property type="entry name" value="Sep15_SelM"/>
    <property type="match status" value="1"/>
</dbReference>
<dbReference type="SUPFAM" id="SSF52833">
    <property type="entry name" value="Thioredoxin-like"/>
    <property type="match status" value="1"/>
</dbReference>
<comment type="function">
    <text>May function as a thiol-disulfide oxidoreductase that participates in disulfide bond formation.</text>
</comment>
<comment type="subcellular location">
    <subcellularLocation>
        <location evidence="4">Cytoplasm</location>
        <location evidence="4">Perinuclear region</location>
    </subcellularLocation>
    <subcellularLocation>
        <location evidence="7">Endoplasmic reticulum</location>
    </subcellularLocation>
    <subcellularLocation>
        <location evidence="7">Golgi apparatus</location>
    </subcellularLocation>
    <text>Localized to perinuclear structures corresponding to Golgi and endoplasmic reticulum.</text>
</comment>
<comment type="tissue specificity">
    <text evidence="4">Widely expressed. Highly expressed in brain.</text>
</comment>
<comment type="similarity">
    <text evidence="6">Belongs to the selenoprotein M/F family.</text>
</comment>
<comment type="sequence caution" evidence="6">
    <conflict type="erroneous termination">
        <sequence resource="EMBL-CDS" id="AAH19742"/>
    </conflict>
    <text>Truncated C-terminus.</text>
</comment>
<evidence type="ECO:0000250" key="1"/>
<evidence type="ECO:0000255" key="2"/>
<evidence type="ECO:0000256" key="3">
    <source>
        <dbReference type="SAM" id="MobiDB-lite"/>
    </source>
</evidence>
<evidence type="ECO:0000269" key="4">
    <source>
    </source>
</evidence>
<evidence type="ECO:0000303" key="5">
    <source>
    </source>
</evidence>
<evidence type="ECO:0000305" key="6"/>
<evidence type="ECO:0000305" key="7">
    <source>
    </source>
</evidence>
<evidence type="ECO:0000312" key="8">
    <source>
        <dbReference type="MGI" id="MGI:2149786"/>
    </source>
</evidence>
<evidence type="ECO:0007829" key="9">
    <source>
        <dbReference type="PDB" id="2A2P"/>
    </source>
</evidence>